<evidence type="ECO:0000250" key="1"/>
<evidence type="ECO:0000255" key="2"/>
<evidence type="ECO:0000305" key="3"/>
<feature type="chain" id="PRO_0000372273" description="Putative antiporter subunit mnhB2">
    <location>
        <begin position="1"/>
        <end position="141"/>
    </location>
</feature>
<feature type="transmembrane region" description="Helical" evidence="2">
    <location>
        <begin position="10"/>
        <end position="30"/>
    </location>
</feature>
<feature type="transmembrane region" description="Helical" evidence="2">
    <location>
        <begin position="35"/>
        <end position="55"/>
    </location>
</feature>
<feature type="transmembrane region" description="Helical" evidence="2">
    <location>
        <begin position="70"/>
        <end position="90"/>
    </location>
</feature>
<feature type="transmembrane region" description="Helical" evidence="2">
    <location>
        <begin position="114"/>
        <end position="134"/>
    </location>
</feature>
<proteinExistence type="inferred from homology"/>
<sequence>MKENDVVLRTVTKLVVFILLTFGFYVFFAGHNNPGGGFIGGLIFSSAFILMFLAFNVEEVLESLPIDFRILMIIGALVSSITAIIPMFFGKPFLSQYETTWILPILGQIHVSTITLFELGILFSVVGVIVTVMLSLSGGRS</sequence>
<reference key="1">
    <citation type="journal article" date="2008" name="Antimicrob. Agents Chemother.">
        <title>Mutated response regulator graR is responsible for phenotypic conversion of Staphylococcus aureus from heterogeneous vancomycin-intermediate resistance to vancomycin-intermediate resistance.</title>
        <authorList>
            <person name="Neoh H.-M."/>
            <person name="Cui L."/>
            <person name="Yuzawa H."/>
            <person name="Takeuchi F."/>
            <person name="Matsuo M."/>
            <person name="Hiramatsu K."/>
        </authorList>
    </citation>
    <scope>NUCLEOTIDE SEQUENCE [LARGE SCALE GENOMIC DNA]</scope>
    <source>
        <strain>Mu3 / ATCC 700698</strain>
    </source>
</reference>
<organism>
    <name type="scientific">Staphylococcus aureus (strain Mu3 / ATCC 700698)</name>
    <dbReference type="NCBI Taxonomy" id="418127"/>
    <lineage>
        <taxon>Bacteria</taxon>
        <taxon>Bacillati</taxon>
        <taxon>Bacillota</taxon>
        <taxon>Bacilli</taxon>
        <taxon>Bacillales</taxon>
        <taxon>Staphylococcaceae</taxon>
        <taxon>Staphylococcus</taxon>
    </lineage>
</organism>
<name>MNHB2_STAA1</name>
<accession>A7WZ77</accession>
<keyword id="KW-0050">Antiport</keyword>
<keyword id="KW-1003">Cell membrane</keyword>
<keyword id="KW-0406">Ion transport</keyword>
<keyword id="KW-0472">Membrane</keyword>
<keyword id="KW-0812">Transmembrane</keyword>
<keyword id="KW-1133">Transmembrane helix</keyword>
<keyword id="KW-0813">Transport</keyword>
<gene>
    <name type="primary">mnhB2</name>
    <name type="synonym">mrpB2</name>
    <name type="ordered locus">SAHV_0620</name>
</gene>
<dbReference type="EMBL" id="AP009324">
    <property type="protein sequence ID" value="BAF77503.1"/>
    <property type="molecule type" value="Genomic_DNA"/>
</dbReference>
<dbReference type="RefSeq" id="WP_000661906.1">
    <property type="nucleotide sequence ID" value="NZ_CTYB01000002.1"/>
</dbReference>
<dbReference type="SMR" id="A7WZ77"/>
<dbReference type="KEGG" id="saw:SAHV_0620"/>
<dbReference type="HOGENOM" id="CLU_101659_1_1_9"/>
<dbReference type="GO" id="GO:0005886">
    <property type="term" value="C:plasma membrane"/>
    <property type="evidence" value="ECO:0007669"/>
    <property type="project" value="UniProtKB-SubCell"/>
</dbReference>
<dbReference type="GO" id="GO:0015297">
    <property type="term" value="F:antiporter activity"/>
    <property type="evidence" value="ECO:0007669"/>
    <property type="project" value="UniProtKB-KW"/>
</dbReference>
<dbReference type="GO" id="GO:0006811">
    <property type="term" value="P:monoatomic ion transport"/>
    <property type="evidence" value="ECO:0007669"/>
    <property type="project" value="UniProtKB-KW"/>
</dbReference>
<dbReference type="InterPro" id="IPR050622">
    <property type="entry name" value="CPA3_antiporter_subunitB"/>
</dbReference>
<dbReference type="InterPro" id="IPR007182">
    <property type="entry name" value="MnhB"/>
</dbReference>
<dbReference type="NCBIfam" id="NF009223">
    <property type="entry name" value="PRK12573.1"/>
    <property type="match status" value="1"/>
</dbReference>
<dbReference type="NCBIfam" id="NF009224">
    <property type="entry name" value="PRK12574.1"/>
    <property type="match status" value="1"/>
</dbReference>
<dbReference type="PANTHER" id="PTHR33932">
    <property type="entry name" value="NA(+)/H(+) ANTIPORTER SUBUNIT B"/>
    <property type="match status" value="1"/>
</dbReference>
<dbReference type="PANTHER" id="PTHR33932:SF4">
    <property type="entry name" value="NA(+)_H(+) ANTIPORTER SUBUNIT B"/>
    <property type="match status" value="1"/>
</dbReference>
<dbReference type="Pfam" id="PF04039">
    <property type="entry name" value="MnhB"/>
    <property type="match status" value="1"/>
</dbReference>
<comment type="subunit">
    <text evidence="1">May form a heterooligomeric complex that consists of seven subunits: mnhA2, mnhB2, mnhC2, mnhD2, mnhE2, mnhF2 and mnhG2.</text>
</comment>
<comment type="subcellular location">
    <subcellularLocation>
        <location evidence="3">Cell membrane</location>
        <topology evidence="3">Multi-pass membrane protein</topology>
    </subcellularLocation>
</comment>
<comment type="similarity">
    <text evidence="3">Belongs to the CPA3 antiporters (TC 2.A.63) subunit B family.</text>
</comment>
<protein>
    <recommendedName>
        <fullName>Putative antiporter subunit mnhB2</fullName>
    </recommendedName>
    <alternativeName>
        <fullName>Mrp complex subunit B2</fullName>
    </alternativeName>
    <alternativeName>
        <fullName>Putative NADH-ubiquinone oxidoreductase subunit mnhB2</fullName>
    </alternativeName>
</protein>